<name>ATPA_THEP1</name>
<proteinExistence type="inferred from homology"/>
<dbReference type="EC" id="7.1.2.2" evidence="1"/>
<dbReference type="EMBL" id="CP000702">
    <property type="protein sequence ID" value="ABQ47193.1"/>
    <property type="molecule type" value="Genomic_DNA"/>
</dbReference>
<dbReference type="RefSeq" id="WP_004082064.1">
    <property type="nucleotide sequence ID" value="NC_009486.1"/>
</dbReference>
<dbReference type="SMR" id="A5ILX0"/>
<dbReference type="STRING" id="390874.Tpet_1179"/>
<dbReference type="KEGG" id="tpt:Tpet_1179"/>
<dbReference type="eggNOG" id="COG0056">
    <property type="taxonomic scope" value="Bacteria"/>
</dbReference>
<dbReference type="HOGENOM" id="CLU_010091_2_1_0"/>
<dbReference type="Proteomes" id="UP000006558">
    <property type="component" value="Chromosome"/>
</dbReference>
<dbReference type="GO" id="GO:0005886">
    <property type="term" value="C:plasma membrane"/>
    <property type="evidence" value="ECO:0007669"/>
    <property type="project" value="UniProtKB-SubCell"/>
</dbReference>
<dbReference type="GO" id="GO:0045259">
    <property type="term" value="C:proton-transporting ATP synthase complex"/>
    <property type="evidence" value="ECO:0007669"/>
    <property type="project" value="UniProtKB-KW"/>
</dbReference>
<dbReference type="GO" id="GO:0043531">
    <property type="term" value="F:ADP binding"/>
    <property type="evidence" value="ECO:0007669"/>
    <property type="project" value="TreeGrafter"/>
</dbReference>
<dbReference type="GO" id="GO:0005524">
    <property type="term" value="F:ATP binding"/>
    <property type="evidence" value="ECO:0007669"/>
    <property type="project" value="UniProtKB-UniRule"/>
</dbReference>
<dbReference type="GO" id="GO:0046933">
    <property type="term" value="F:proton-transporting ATP synthase activity, rotational mechanism"/>
    <property type="evidence" value="ECO:0007669"/>
    <property type="project" value="UniProtKB-UniRule"/>
</dbReference>
<dbReference type="CDD" id="cd18113">
    <property type="entry name" value="ATP-synt_F1_alpha_C"/>
    <property type="match status" value="1"/>
</dbReference>
<dbReference type="CDD" id="cd18116">
    <property type="entry name" value="ATP-synt_F1_alpha_N"/>
    <property type="match status" value="1"/>
</dbReference>
<dbReference type="CDD" id="cd01132">
    <property type="entry name" value="F1-ATPase_alpha_CD"/>
    <property type="match status" value="1"/>
</dbReference>
<dbReference type="FunFam" id="1.20.150.20:FF:000001">
    <property type="entry name" value="ATP synthase subunit alpha"/>
    <property type="match status" value="1"/>
</dbReference>
<dbReference type="FunFam" id="2.40.30.20:FF:000001">
    <property type="entry name" value="ATP synthase subunit alpha"/>
    <property type="match status" value="1"/>
</dbReference>
<dbReference type="FunFam" id="3.40.50.300:FF:000002">
    <property type="entry name" value="ATP synthase subunit alpha"/>
    <property type="match status" value="1"/>
</dbReference>
<dbReference type="Gene3D" id="2.40.30.20">
    <property type="match status" value="1"/>
</dbReference>
<dbReference type="Gene3D" id="1.20.150.20">
    <property type="entry name" value="ATP synthase alpha/beta chain, C-terminal domain"/>
    <property type="match status" value="1"/>
</dbReference>
<dbReference type="Gene3D" id="3.40.50.300">
    <property type="entry name" value="P-loop containing nucleotide triphosphate hydrolases"/>
    <property type="match status" value="1"/>
</dbReference>
<dbReference type="HAMAP" id="MF_01346">
    <property type="entry name" value="ATP_synth_alpha_bact"/>
    <property type="match status" value="1"/>
</dbReference>
<dbReference type="InterPro" id="IPR023366">
    <property type="entry name" value="ATP_synth_asu-like_sf"/>
</dbReference>
<dbReference type="InterPro" id="IPR000793">
    <property type="entry name" value="ATP_synth_asu_C"/>
</dbReference>
<dbReference type="InterPro" id="IPR038376">
    <property type="entry name" value="ATP_synth_asu_C_sf"/>
</dbReference>
<dbReference type="InterPro" id="IPR033732">
    <property type="entry name" value="ATP_synth_F1_a_nt-bd_dom"/>
</dbReference>
<dbReference type="InterPro" id="IPR005294">
    <property type="entry name" value="ATP_synth_F1_asu"/>
</dbReference>
<dbReference type="InterPro" id="IPR020003">
    <property type="entry name" value="ATPase_a/bsu_AS"/>
</dbReference>
<dbReference type="InterPro" id="IPR004100">
    <property type="entry name" value="ATPase_F1/V1/A1_a/bsu_N"/>
</dbReference>
<dbReference type="InterPro" id="IPR036121">
    <property type="entry name" value="ATPase_F1/V1/A1_a/bsu_N_sf"/>
</dbReference>
<dbReference type="InterPro" id="IPR000194">
    <property type="entry name" value="ATPase_F1/V1/A1_a/bsu_nucl-bd"/>
</dbReference>
<dbReference type="InterPro" id="IPR027417">
    <property type="entry name" value="P-loop_NTPase"/>
</dbReference>
<dbReference type="NCBIfam" id="TIGR00962">
    <property type="entry name" value="atpA"/>
    <property type="match status" value="1"/>
</dbReference>
<dbReference type="NCBIfam" id="NF009884">
    <property type="entry name" value="PRK13343.1"/>
    <property type="match status" value="1"/>
</dbReference>
<dbReference type="PANTHER" id="PTHR48082">
    <property type="entry name" value="ATP SYNTHASE SUBUNIT ALPHA, MITOCHONDRIAL"/>
    <property type="match status" value="1"/>
</dbReference>
<dbReference type="PANTHER" id="PTHR48082:SF2">
    <property type="entry name" value="ATP SYNTHASE SUBUNIT ALPHA, MITOCHONDRIAL"/>
    <property type="match status" value="1"/>
</dbReference>
<dbReference type="Pfam" id="PF00006">
    <property type="entry name" value="ATP-synt_ab"/>
    <property type="match status" value="1"/>
</dbReference>
<dbReference type="Pfam" id="PF00306">
    <property type="entry name" value="ATP-synt_ab_C"/>
    <property type="match status" value="1"/>
</dbReference>
<dbReference type="Pfam" id="PF02874">
    <property type="entry name" value="ATP-synt_ab_N"/>
    <property type="match status" value="1"/>
</dbReference>
<dbReference type="PIRSF" id="PIRSF039088">
    <property type="entry name" value="F_ATPase_subunit_alpha"/>
    <property type="match status" value="1"/>
</dbReference>
<dbReference type="SUPFAM" id="SSF47917">
    <property type="entry name" value="C-terminal domain of alpha and beta subunits of F1 ATP synthase"/>
    <property type="match status" value="1"/>
</dbReference>
<dbReference type="SUPFAM" id="SSF50615">
    <property type="entry name" value="N-terminal domain of alpha and beta subunits of F1 ATP synthase"/>
    <property type="match status" value="1"/>
</dbReference>
<dbReference type="SUPFAM" id="SSF52540">
    <property type="entry name" value="P-loop containing nucleoside triphosphate hydrolases"/>
    <property type="match status" value="1"/>
</dbReference>
<dbReference type="PROSITE" id="PS00152">
    <property type="entry name" value="ATPASE_ALPHA_BETA"/>
    <property type="match status" value="1"/>
</dbReference>
<sequence length="503" mass="56062">MRINPGEITKVLEEKIKSFEEKIDLEDTGKVIQVGDGIARAYGLNKVMVSELVEFVETGVKGVAFNLEEDNVGIIILGEYKDIKEGHTVRRLKRIIEVPVGEELLGRVVNPLGEPLDGKGPINAKNFRPIEIKAPGVIYRKPVDTPLQTGIKAIDSMIPIGRGQRELIIGDRQTGKTAIAIDTIINQKGQGVYCIYVAIGQKKSAIARIIDKLRQYGAMEYTTVVVASASDPASLQYIAPYAGCAMGEYFAYSGRDALVVYDDLSKHAVAYRQLSLLMRRPPGREAYPGDIFYLHSRLLERAVRLNDKLGGGSLTALPIVETQANDISAYIPTNVISITDGQIYLEPGLFYAGQRPAINVGLSVSRVGGSAQIKAMKQVAGMLRIDLAQYRELETFAQFATELDPATRAQIIRGQRLMELLKQEQYSPMPVEEQVVVLFAGVRGYLDDLPVEEVRRFEKEFLRFMHEKHQDILDDIKTKKELTSETEEKLKKAIEEFKTTFRV</sequence>
<comment type="function">
    <text evidence="1">Produces ATP from ADP in the presence of a proton gradient across the membrane. The alpha chain is a regulatory subunit.</text>
</comment>
<comment type="catalytic activity">
    <reaction evidence="1">
        <text>ATP + H2O + 4 H(+)(in) = ADP + phosphate + 5 H(+)(out)</text>
        <dbReference type="Rhea" id="RHEA:57720"/>
        <dbReference type="ChEBI" id="CHEBI:15377"/>
        <dbReference type="ChEBI" id="CHEBI:15378"/>
        <dbReference type="ChEBI" id="CHEBI:30616"/>
        <dbReference type="ChEBI" id="CHEBI:43474"/>
        <dbReference type="ChEBI" id="CHEBI:456216"/>
        <dbReference type="EC" id="7.1.2.2"/>
    </reaction>
</comment>
<comment type="subunit">
    <text evidence="1">F-type ATPases have 2 components, CF(1) - the catalytic core - and CF(0) - the membrane proton channel. CF(1) has five subunits: alpha(3), beta(3), gamma(1), delta(1), epsilon(1). CF(0) has three main subunits: a(1), b(2) and c(9-12). The alpha and beta chains form an alternating ring which encloses part of the gamma chain. CF(1) is attached to CF(0) by a central stalk formed by the gamma and epsilon chains, while a peripheral stalk is formed by the delta and b chains.</text>
</comment>
<comment type="subcellular location">
    <subcellularLocation>
        <location evidence="1">Cell inner membrane</location>
        <topology evidence="1">Peripheral membrane protein</topology>
    </subcellularLocation>
</comment>
<comment type="similarity">
    <text evidence="1">Belongs to the ATPase alpha/beta chains family.</text>
</comment>
<reference key="1">
    <citation type="submission" date="2007-05" db="EMBL/GenBank/DDBJ databases">
        <title>Complete sequence of Thermotoga petrophila RKU-1.</title>
        <authorList>
            <consortium name="US DOE Joint Genome Institute"/>
            <person name="Copeland A."/>
            <person name="Lucas S."/>
            <person name="Lapidus A."/>
            <person name="Barry K."/>
            <person name="Glavina del Rio T."/>
            <person name="Dalin E."/>
            <person name="Tice H."/>
            <person name="Pitluck S."/>
            <person name="Sims D."/>
            <person name="Brettin T."/>
            <person name="Bruce D."/>
            <person name="Detter J.C."/>
            <person name="Han C."/>
            <person name="Tapia R."/>
            <person name="Schmutz J."/>
            <person name="Larimer F."/>
            <person name="Land M."/>
            <person name="Hauser L."/>
            <person name="Kyrpides N."/>
            <person name="Mikhailova N."/>
            <person name="Nelson K."/>
            <person name="Gogarten J.P."/>
            <person name="Noll K."/>
            <person name="Richardson P."/>
        </authorList>
    </citation>
    <scope>NUCLEOTIDE SEQUENCE [LARGE SCALE GENOMIC DNA]</scope>
    <source>
        <strain>ATCC BAA-488 / DSM 13995 / JCM 10881 / RKU-1</strain>
    </source>
</reference>
<feature type="chain" id="PRO_1000055088" description="ATP synthase subunit alpha">
    <location>
        <begin position="1"/>
        <end position="503"/>
    </location>
</feature>
<feature type="binding site" evidence="1">
    <location>
        <begin position="170"/>
        <end position="177"/>
    </location>
    <ligand>
        <name>ATP</name>
        <dbReference type="ChEBI" id="CHEBI:30616"/>
    </ligand>
</feature>
<feature type="site" description="Required for activity" evidence="1">
    <location>
        <position position="363"/>
    </location>
</feature>
<keyword id="KW-0066">ATP synthesis</keyword>
<keyword id="KW-0067">ATP-binding</keyword>
<keyword id="KW-0997">Cell inner membrane</keyword>
<keyword id="KW-1003">Cell membrane</keyword>
<keyword id="KW-0139">CF(1)</keyword>
<keyword id="KW-0375">Hydrogen ion transport</keyword>
<keyword id="KW-0406">Ion transport</keyword>
<keyword id="KW-0472">Membrane</keyword>
<keyword id="KW-0547">Nucleotide-binding</keyword>
<keyword id="KW-1278">Translocase</keyword>
<keyword id="KW-0813">Transport</keyword>
<protein>
    <recommendedName>
        <fullName evidence="1">ATP synthase subunit alpha</fullName>
        <ecNumber evidence="1">7.1.2.2</ecNumber>
    </recommendedName>
    <alternativeName>
        <fullName evidence="1">ATP synthase F1 sector subunit alpha</fullName>
    </alternativeName>
    <alternativeName>
        <fullName evidence="1">F-ATPase subunit alpha</fullName>
    </alternativeName>
</protein>
<accession>A5ILX0</accession>
<evidence type="ECO:0000255" key="1">
    <source>
        <dbReference type="HAMAP-Rule" id="MF_01346"/>
    </source>
</evidence>
<gene>
    <name evidence="1" type="primary">atpA</name>
    <name type="ordered locus">Tpet_1179</name>
</gene>
<organism>
    <name type="scientific">Thermotoga petrophila (strain ATCC BAA-488 / DSM 13995 / JCM 10881 / RKU-1)</name>
    <dbReference type="NCBI Taxonomy" id="390874"/>
    <lineage>
        <taxon>Bacteria</taxon>
        <taxon>Thermotogati</taxon>
        <taxon>Thermotogota</taxon>
        <taxon>Thermotogae</taxon>
        <taxon>Thermotogales</taxon>
        <taxon>Thermotogaceae</taxon>
        <taxon>Thermotoga</taxon>
    </lineage>
</organism>